<evidence type="ECO:0000255" key="1">
    <source>
        <dbReference type="HAMAP-Rule" id="MF_01077"/>
    </source>
</evidence>
<dbReference type="EMBL" id="AM406671">
    <property type="protein sequence ID" value="CAL98368.1"/>
    <property type="molecule type" value="Genomic_DNA"/>
</dbReference>
<dbReference type="RefSeq" id="WP_011835573.1">
    <property type="nucleotide sequence ID" value="NC_009004.1"/>
</dbReference>
<dbReference type="SMR" id="A2RM41"/>
<dbReference type="STRING" id="416870.llmg_1797"/>
<dbReference type="KEGG" id="llm:llmg_1797"/>
<dbReference type="eggNOG" id="COG0779">
    <property type="taxonomic scope" value="Bacteria"/>
</dbReference>
<dbReference type="HOGENOM" id="CLU_070525_2_0_9"/>
<dbReference type="OrthoDB" id="9805006at2"/>
<dbReference type="PhylomeDB" id="A2RM41"/>
<dbReference type="Proteomes" id="UP000000364">
    <property type="component" value="Chromosome"/>
</dbReference>
<dbReference type="GO" id="GO:0005829">
    <property type="term" value="C:cytosol"/>
    <property type="evidence" value="ECO:0007669"/>
    <property type="project" value="TreeGrafter"/>
</dbReference>
<dbReference type="GO" id="GO:0000028">
    <property type="term" value="P:ribosomal small subunit assembly"/>
    <property type="evidence" value="ECO:0007669"/>
    <property type="project" value="TreeGrafter"/>
</dbReference>
<dbReference type="GO" id="GO:0006412">
    <property type="term" value="P:translation"/>
    <property type="evidence" value="ECO:0007669"/>
    <property type="project" value="TreeGrafter"/>
</dbReference>
<dbReference type="CDD" id="cd01734">
    <property type="entry name" value="YlxS_C"/>
    <property type="match status" value="1"/>
</dbReference>
<dbReference type="Gene3D" id="2.30.30.180">
    <property type="entry name" value="Ribosome maturation factor RimP, C-terminal domain"/>
    <property type="match status" value="1"/>
</dbReference>
<dbReference type="Gene3D" id="3.30.300.70">
    <property type="entry name" value="RimP-like superfamily, N-terminal"/>
    <property type="match status" value="1"/>
</dbReference>
<dbReference type="HAMAP" id="MF_01077">
    <property type="entry name" value="RimP"/>
    <property type="match status" value="1"/>
</dbReference>
<dbReference type="InterPro" id="IPR003728">
    <property type="entry name" value="Ribosome_maturation_RimP"/>
</dbReference>
<dbReference type="InterPro" id="IPR028998">
    <property type="entry name" value="RimP_C"/>
</dbReference>
<dbReference type="InterPro" id="IPR036847">
    <property type="entry name" value="RimP_C_sf"/>
</dbReference>
<dbReference type="InterPro" id="IPR028989">
    <property type="entry name" value="RimP_N"/>
</dbReference>
<dbReference type="InterPro" id="IPR035956">
    <property type="entry name" value="RimP_N_sf"/>
</dbReference>
<dbReference type="NCBIfam" id="NF000928">
    <property type="entry name" value="PRK00092.1-2"/>
    <property type="match status" value="1"/>
</dbReference>
<dbReference type="PANTHER" id="PTHR33867">
    <property type="entry name" value="RIBOSOME MATURATION FACTOR RIMP"/>
    <property type="match status" value="1"/>
</dbReference>
<dbReference type="PANTHER" id="PTHR33867:SF1">
    <property type="entry name" value="RIBOSOME MATURATION FACTOR RIMP"/>
    <property type="match status" value="1"/>
</dbReference>
<dbReference type="Pfam" id="PF17384">
    <property type="entry name" value="DUF150_C"/>
    <property type="match status" value="1"/>
</dbReference>
<dbReference type="Pfam" id="PF02576">
    <property type="entry name" value="RimP_N"/>
    <property type="match status" value="1"/>
</dbReference>
<dbReference type="SUPFAM" id="SSF74942">
    <property type="entry name" value="YhbC-like, C-terminal domain"/>
    <property type="match status" value="1"/>
</dbReference>
<dbReference type="SUPFAM" id="SSF75420">
    <property type="entry name" value="YhbC-like, N-terminal domain"/>
    <property type="match status" value="1"/>
</dbReference>
<feature type="chain" id="PRO_1000064724" description="Ribosome maturation factor RimP">
    <location>
        <begin position="1"/>
        <end position="157"/>
    </location>
</feature>
<reference key="1">
    <citation type="journal article" date="2007" name="J. Bacteriol.">
        <title>The complete genome sequence of the lactic acid bacterial paradigm Lactococcus lactis subsp. cremoris MG1363.</title>
        <authorList>
            <person name="Wegmann U."/>
            <person name="O'Connell-Motherway M."/>
            <person name="Zomer A."/>
            <person name="Buist G."/>
            <person name="Shearman C."/>
            <person name="Canchaya C."/>
            <person name="Ventura M."/>
            <person name="Goesmann A."/>
            <person name="Gasson M.J."/>
            <person name="Kuipers O.P."/>
            <person name="van Sinderen D."/>
            <person name="Kok J."/>
        </authorList>
    </citation>
    <scope>NUCLEOTIDE SEQUENCE [LARGE SCALE GENOMIC DNA]</scope>
    <source>
        <strain>MG1363</strain>
    </source>
</reference>
<protein>
    <recommendedName>
        <fullName evidence="1">Ribosome maturation factor RimP</fullName>
    </recommendedName>
</protein>
<accession>A2RM41</accession>
<organism>
    <name type="scientific">Lactococcus lactis subsp. cremoris (strain MG1363)</name>
    <dbReference type="NCBI Taxonomy" id="416870"/>
    <lineage>
        <taxon>Bacteria</taxon>
        <taxon>Bacillati</taxon>
        <taxon>Bacillota</taxon>
        <taxon>Bacilli</taxon>
        <taxon>Lactobacillales</taxon>
        <taxon>Streptococcaceae</taxon>
        <taxon>Lactococcus</taxon>
        <taxon>Lactococcus cremoris subsp. cremoris</taxon>
    </lineage>
</organism>
<gene>
    <name evidence="1" type="primary">rimP</name>
    <name type="ordered locus">llmg_1797</name>
</gene>
<proteinExistence type="inferred from homology"/>
<keyword id="KW-0963">Cytoplasm</keyword>
<keyword id="KW-0690">Ribosome biogenesis</keyword>
<comment type="function">
    <text evidence="1">Required for maturation of 30S ribosomal subunits.</text>
</comment>
<comment type="subcellular location">
    <subcellularLocation>
        <location evidence="1">Cytoplasm</location>
    </subcellularLocation>
</comment>
<comment type="similarity">
    <text evidence="1">Belongs to the RimP family.</text>
</comment>
<sequence length="157" mass="17552">MNDVVKIVEDFIKPHIPKPFELFAVEWEKFGGDMMLSILVDKEGGIEIDETAELSELISPLLDTISPDPFPTEGYLLEVASPGAERPLRKAEHFAGAVGEYIFVKLYQKINNEKEFTGDLVSFDGETLVVDVLDKTRHKNIEIPLSAVAKAQTMVKF</sequence>
<name>RIMP_LACLM</name>